<proteinExistence type="inferred from homology"/>
<gene>
    <name evidence="1" type="primary">gpmB</name>
    <name type="ordered locus">YpAngola_A0813</name>
</gene>
<protein>
    <recommendedName>
        <fullName evidence="1">Probable phosphoglycerate mutase GpmB</fullName>
        <ecNumber evidence="1">5.4.2.-</ecNumber>
    </recommendedName>
    <alternativeName>
        <fullName evidence="1">PGAM</fullName>
    </alternativeName>
    <alternativeName>
        <fullName evidence="1">Phosphoglyceromutase</fullName>
    </alternativeName>
</protein>
<feature type="chain" id="PRO_1000136021" description="Probable phosphoglycerate mutase GpmB">
    <location>
        <begin position="1"/>
        <end position="215"/>
    </location>
</feature>
<feature type="active site" description="Tele-phosphohistidine intermediate" evidence="1">
    <location>
        <position position="9"/>
    </location>
</feature>
<feature type="active site" description="Proton donor/acceptor" evidence="1">
    <location>
        <position position="82"/>
    </location>
</feature>
<feature type="binding site" evidence="1">
    <location>
        <begin position="8"/>
        <end position="15"/>
    </location>
    <ligand>
        <name>substrate</name>
    </ligand>
</feature>
<feature type="binding site" evidence="1">
    <location>
        <begin position="21"/>
        <end position="22"/>
    </location>
    <ligand>
        <name>substrate</name>
    </ligand>
</feature>
<feature type="binding site" evidence="1">
    <location>
        <position position="58"/>
    </location>
    <ligand>
        <name>substrate</name>
    </ligand>
</feature>
<feature type="binding site" evidence="1">
    <location>
        <begin position="82"/>
        <end position="85"/>
    </location>
    <ligand>
        <name>substrate</name>
    </ligand>
</feature>
<feature type="binding site" evidence="1">
    <location>
        <begin position="151"/>
        <end position="152"/>
    </location>
    <ligand>
        <name>substrate</name>
    </ligand>
</feature>
<feature type="site" description="Transition state stabilizer" evidence="1">
    <location>
        <position position="150"/>
    </location>
</feature>
<sequence>MLQVYLVRHGETLWNAARRIQGQSDSPLTEIGIRQAHLVAQRVRNQGITHIISSDLGRTQQTAKIIADACGLTMVTDPRLRELNMGVLENRPIDSLTPEEEQWRKQMVNGTEGARIPEGESMTELGRRMHAALDSCLELPAGSKPLLVSHGMALGCLLSTLLGLPAHAERRLRLRNCSLSRVDYQESPWLASGWVIESAGDTAHLDMPALDELQR</sequence>
<accession>A9R032</accession>
<evidence type="ECO:0000255" key="1">
    <source>
        <dbReference type="HAMAP-Rule" id="MF_01040"/>
    </source>
</evidence>
<reference key="1">
    <citation type="journal article" date="2010" name="J. Bacteriol.">
        <title>Genome sequence of the deep-rooted Yersinia pestis strain Angola reveals new insights into the evolution and pangenome of the plague bacterium.</title>
        <authorList>
            <person name="Eppinger M."/>
            <person name="Worsham P.L."/>
            <person name="Nikolich M.P."/>
            <person name="Riley D.R."/>
            <person name="Sebastian Y."/>
            <person name="Mou S."/>
            <person name="Achtman M."/>
            <person name="Lindler L.E."/>
            <person name="Ravel J."/>
        </authorList>
    </citation>
    <scope>NUCLEOTIDE SEQUENCE [LARGE SCALE GENOMIC DNA]</scope>
    <source>
        <strain>Angola</strain>
    </source>
</reference>
<dbReference type="EC" id="5.4.2.-" evidence="1"/>
<dbReference type="EMBL" id="CP000901">
    <property type="protein sequence ID" value="ABX85601.1"/>
    <property type="molecule type" value="Genomic_DNA"/>
</dbReference>
<dbReference type="RefSeq" id="WP_002209230.1">
    <property type="nucleotide sequence ID" value="NZ_CP009935.1"/>
</dbReference>
<dbReference type="SMR" id="A9R032"/>
<dbReference type="GeneID" id="57974154"/>
<dbReference type="KEGG" id="ypg:YpAngola_A0813"/>
<dbReference type="PATRIC" id="fig|349746.12.peg.1766"/>
<dbReference type="UniPathway" id="UPA00109">
    <property type="reaction ID" value="UER00186"/>
</dbReference>
<dbReference type="GO" id="GO:0005737">
    <property type="term" value="C:cytoplasm"/>
    <property type="evidence" value="ECO:0007669"/>
    <property type="project" value="TreeGrafter"/>
</dbReference>
<dbReference type="GO" id="GO:0016791">
    <property type="term" value="F:phosphatase activity"/>
    <property type="evidence" value="ECO:0007669"/>
    <property type="project" value="TreeGrafter"/>
</dbReference>
<dbReference type="GO" id="GO:0004619">
    <property type="term" value="F:phosphoglycerate mutase activity"/>
    <property type="evidence" value="ECO:0007669"/>
    <property type="project" value="UniProtKB-UniRule"/>
</dbReference>
<dbReference type="GO" id="GO:0006096">
    <property type="term" value="P:glycolytic process"/>
    <property type="evidence" value="ECO:0007669"/>
    <property type="project" value="UniProtKB-UniRule"/>
</dbReference>
<dbReference type="CDD" id="cd07067">
    <property type="entry name" value="HP_PGM_like"/>
    <property type="match status" value="1"/>
</dbReference>
<dbReference type="Gene3D" id="3.40.50.1240">
    <property type="entry name" value="Phosphoglycerate mutase-like"/>
    <property type="match status" value="1"/>
</dbReference>
<dbReference type="HAMAP" id="MF_01040">
    <property type="entry name" value="PGAM_GpmB"/>
    <property type="match status" value="1"/>
</dbReference>
<dbReference type="InterPro" id="IPR013078">
    <property type="entry name" value="His_Pase_superF_clade-1"/>
</dbReference>
<dbReference type="InterPro" id="IPR029033">
    <property type="entry name" value="His_PPase_superfam"/>
</dbReference>
<dbReference type="InterPro" id="IPR001345">
    <property type="entry name" value="PG/BPGM_mutase_AS"/>
</dbReference>
<dbReference type="InterPro" id="IPR050275">
    <property type="entry name" value="PGM_Phosphatase"/>
</dbReference>
<dbReference type="InterPro" id="IPR023086">
    <property type="entry name" value="Phosphoglycerate_mutase_GpmB"/>
</dbReference>
<dbReference type="NCBIfam" id="NF002901">
    <property type="entry name" value="PRK03482.1"/>
    <property type="match status" value="1"/>
</dbReference>
<dbReference type="PANTHER" id="PTHR48100">
    <property type="entry name" value="BROAD-SPECIFICITY PHOSPHATASE YOR283W-RELATED"/>
    <property type="match status" value="1"/>
</dbReference>
<dbReference type="PANTHER" id="PTHR48100:SF1">
    <property type="entry name" value="HISTIDINE PHOSPHATASE FAMILY PROTEIN-RELATED"/>
    <property type="match status" value="1"/>
</dbReference>
<dbReference type="Pfam" id="PF00300">
    <property type="entry name" value="His_Phos_1"/>
    <property type="match status" value="1"/>
</dbReference>
<dbReference type="SMART" id="SM00855">
    <property type="entry name" value="PGAM"/>
    <property type="match status" value="1"/>
</dbReference>
<dbReference type="SUPFAM" id="SSF53254">
    <property type="entry name" value="Phosphoglycerate mutase-like"/>
    <property type="match status" value="1"/>
</dbReference>
<dbReference type="PROSITE" id="PS00175">
    <property type="entry name" value="PG_MUTASE"/>
    <property type="match status" value="1"/>
</dbReference>
<keyword id="KW-0324">Glycolysis</keyword>
<keyword id="KW-0413">Isomerase</keyword>
<organism>
    <name type="scientific">Yersinia pestis bv. Antiqua (strain Angola)</name>
    <dbReference type="NCBI Taxonomy" id="349746"/>
    <lineage>
        <taxon>Bacteria</taxon>
        <taxon>Pseudomonadati</taxon>
        <taxon>Pseudomonadota</taxon>
        <taxon>Gammaproteobacteria</taxon>
        <taxon>Enterobacterales</taxon>
        <taxon>Yersiniaceae</taxon>
        <taxon>Yersinia</taxon>
    </lineage>
</organism>
<name>GPMB_YERPG</name>
<comment type="catalytic activity">
    <reaction evidence="1">
        <text>(2R)-2-phosphoglycerate = (2R)-3-phosphoglycerate</text>
        <dbReference type="Rhea" id="RHEA:15901"/>
        <dbReference type="ChEBI" id="CHEBI:58272"/>
        <dbReference type="ChEBI" id="CHEBI:58289"/>
    </reaction>
</comment>
<comment type="pathway">
    <text evidence="1">Carbohydrate degradation; glycolysis; pyruvate from D-glyceraldehyde 3-phosphate: step 3/5.</text>
</comment>
<comment type="similarity">
    <text evidence="1">Belongs to the phosphoglycerate mutase family. GpmB subfamily.</text>
</comment>